<dbReference type="EC" id="2.7.7.23" evidence="1"/>
<dbReference type="EC" id="2.3.1.157" evidence="1"/>
<dbReference type="EMBL" id="CP000627">
    <property type="protein sequence ID" value="ABQ19752.1"/>
    <property type="molecule type" value="Genomic_DNA"/>
</dbReference>
<dbReference type="EMBL" id="CP001235">
    <property type="protein sequence ID" value="ACP08220.1"/>
    <property type="molecule type" value="Genomic_DNA"/>
</dbReference>
<dbReference type="RefSeq" id="WP_001890272.1">
    <property type="nucleotide sequence ID" value="NZ_JAACZH010000018.1"/>
</dbReference>
<dbReference type="SMR" id="A5F461"/>
<dbReference type="KEGG" id="vco:VC0395_A2530"/>
<dbReference type="KEGG" id="vcr:VC395_0193"/>
<dbReference type="PATRIC" id="fig|345073.21.peg.182"/>
<dbReference type="eggNOG" id="COG1207">
    <property type="taxonomic scope" value="Bacteria"/>
</dbReference>
<dbReference type="HOGENOM" id="CLU_029499_15_2_6"/>
<dbReference type="OrthoDB" id="9775031at2"/>
<dbReference type="UniPathway" id="UPA00113">
    <property type="reaction ID" value="UER00532"/>
</dbReference>
<dbReference type="UniPathway" id="UPA00113">
    <property type="reaction ID" value="UER00533"/>
</dbReference>
<dbReference type="UniPathway" id="UPA00973"/>
<dbReference type="Proteomes" id="UP000000249">
    <property type="component" value="Chromosome 2"/>
</dbReference>
<dbReference type="GO" id="GO:0005737">
    <property type="term" value="C:cytoplasm"/>
    <property type="evidence" value="ECO:0007669"/>
    <property type="project" value="UniProtKB-SubCell"/>
</dbReference>
<dbReference type="GO" id="GO:0016020">
    <property type="term" value="C:membrane"/>
    <property type="evidence" value="ECO:0007669"/>
    <property type="project" value="GOC"/>
</dbReference>
<dbReference type="GO" id="GO:0019134">
    <property type="term" value="F:glucosamine-1-phosphate N-acetyltransferase activity"/>
    <property type="evidence" value="ECO:0007669"/>
    <property type="project" value="UniProtKB-UniRule"/>
</dbReference>
<dbReference type="GO" id="GO:0000287">
    <property type="term" value="F:magnesium ion binding"/>
    <property type="evidence" value="ECO:0007669"/>
    <property type="project" value="UniProtKB-UniRule"/>
</dbReference>
<dbReference type="GO" id="GO:0003977">
    <property type="term" value="F:UDP-N-acetylglucosamine diphosphorylase activity"/>
    <property type="evidence" value="ECO:0007669"/>
    <property type="project" value="UniProtKB-UniRule"/>
</dbReference>
<dbReference type="GO" id="GO:0000902">
    <property type="term" value="P:cell morphogenesis"/>
    <property type="evidence" value="ECO:0007669"/>
    <property type="project" value="UniProtKB-UniRule"/>
</dbReference>
<dbReference type="GO" id="GO:0071555">
    <property type="term" value="P:cell wall organization"/>
    <property type="evidence" value="ECO:0007669"/>
    <property type="project" value="UniProtKB-KW"/>
</dbReference>
<dbReference type="GO" id="GO:0009245">
    <property type="term" value="P:lipid A biosynthetic process"/>
    <property type="evidence" value="ECO:0007669"/>
    <property type="project" value="UniProtKB-UniRule"/>
</dbReference>
<dbReference type="GO" id="GO:0009252">
    <property type="term" value="P:peptidoglycan biosynthetic process"/>
    <property type="evidence" value="ECO:0007669"/>
    <property type="project" value="UniProtKB-UniRule"/>
</dbReference>
<dbReference type="GO" id="GO:0008360">
    <property type="term" value="P:regulation of cell shape"/>
    <property type="evidence" value="ECO:0007669"/>
    <property type="project" value="UniProtKB-KW"/>
</dbReference>
<dbReference type="GO" id="GO:0006048">
    <property type="term" value="P:UDP-N-acetylglucosamine biosynthetic process"/>
    <property type="evidence" value="ECO:0007669"/>
    <property type="project" value="UniProtKB-UniPathway"/>
</dbReference>
<dbReference type="CDD" id="cd02540">
    <property type="entry name" value="GT2_GlmU_N_bac"/>
    <property type="match status" value="1"/>
</dbReference>
<dbReference type="CDD" id="cd03353">
    <property type="entry name" value="LbH_GlmU_C"/>
    <property type="match status" value="1"/>
</dbReference>
<dbReference type="FunFam" id="3.90.550.10:FF:000006">
    <property type="entry name" value="Bifunctional protein GlmU"/>
    <property type="match status" value="1"/>
</dbReference>
<dbReference type="Gene3D" id="2.160.10.10">
    <property type="entry name" value="Hexapeptide repeat proteins"/>
    <property type="match status" value="1"/>
</dbReference>
<dbReference type="Gene3D" id="3.90.550.10">
    <property type="entry name" value="Spore Coat Polysaccharide Biosynthesis Protein SpsA, Chain A"/>
    <property type="match status" value="1"/>
</dbReference>
<dbReference type="HAMAP" id="MF_01631">
    <property type="entry name" value="GlmU"/>
    <property type="match status" value="1"/>
</dbReference>
<dbReference type="InterPro" id="IPR005882">
    <property type="entry name" value="Bifunctional_GlmU"/>
</dbReference>
<dbReference type="InterPro" id="IPR050065">
    <property type="entry name" value="GlmU-like"/>
</dbReference>
<dbReference type="InterPro" id="IPR038009">
    <property type="entry name" value="GlmU_C_LbH"/>
</dbReference>
<dbReference type="InterPro" id="IPR001451">
    <property type="entry name" value="Hexapep"/>
</dbReference>
<dbReference type="InterPro" id="IPR025877">
    <property type="entry name" value="MobA-like_NTP_Trfase"/>
</dbReference>
<dbReference type="InterPro" id="IPR029044">
    <property type="entry name" value="Nucleotide-diphossugar_trans"/>
</dbReference>
<dbReference type="InterPro" id="IPR011004">
    <property type="entry name" value="Trimer_LpxA-like_sf"/>
</dbReference>
<dbReference type="NCBIfam" id="TIGR01173">
    <property type="entry name" value="glmU"/>
    <property type="match status" value="1"/>
</dbReference>
<dbReference type="NCBIfam" id="NF006986">
    <property type="entry name" value="PRK09451.1"/>
    <property type="match status" value="1"/>
</dbReference>
<dbReference type="PANTHER" id="PTHR43584:SF3">
    <property type="entry name" value="BIFUNCTIONAL PROTEIN GLMU"/>
    <property type="match status" value="1"/>
</dbReference>
<dbReference type="PANTHER" id="PTHR43584">
    <property type="entry name" value="NUCLEOTIDYL TRANSFERASE"/>
    <property type="match status" value="1"/>
</dbReference>
<dbReference type="Pfam" id="PF00132">
    <property type="entry name" value="Hexapep"/>
    <property type="match status" value="1"/>
</dbReference>
<dbReference type="Pfam" id="PF12804">
    <property type="entry name" value="NTP_transf_3"/>
    <property type="match status" value="1"/>
</dbReference>
<dbReference type="SUPFAM" id="SSF53448">
    <property type="entry name" value="Nucleotide-diphospho-sugar transferases"/>
    <property type="match status" value="1"/>
</dbReference>
<dbReference type="SUPFAM" id="SSF51161">
    <property type="entry name" value="Trimeric LpxA-like enzymes"/>
    <property type="match status" value="1"/>
</dbReference>
<reference key="1">
    <citation type="submission" date="2007-03" db="EMBL/GenBank/DDBJ databases">
        <authorList>
            <person name="Heidelberg J."/>
        </authorList>
    </citation>
    <scope>NUCLEOTIDE SEQUENCE [LARGE SCALE GENOMIC DNA]</scope>
    <source>
        <strain>ATCC 39541 / Classical Ogawa 395 / O395</strain>
    </source>
</reference>
<reference key="2">
    <citation type="journal article" date="2008" name="PLoS ONE">
        <title>A recalibrated molecular clock and independent origins for the cholera pandemic clones.</title>
        <authorList>
            <person name="Feng L."/>
            <person name="Reeves P.R."/>
            <person name="Lan R."/>
            <person name="Ren Y."/>
            <person name="Gao C."/>
            <person name="Zhou Z."/>
            <person name="Ren Y."/>
            <person name="Cheng J."/>
            <person name="Wang W."/>
            <person name="Wang J."/>
            <person name="Qian W."/>
            <person name="Li D."/>
            <person name="Wang L."/>
        </authorList>
    </citation>
    <scope>NUCLEOTIDE SEQUENCE [LARGE SCALE GENOMIC DNA]</scope>
    <source>
        <strain>ATCC 39541 / Classical Ogawa 395 / O395</strain>
    </source>
</reference>
<organism>
    <name type="scientific">Vibrio cholerae serotype O1 (strain ATCC 39541 / Classical Ogawa 395 / O395)</name>
    <dbReference type="NCBI Taxonomy" id="345073"/>
    <lineage>
        <taxon>Bacteria</taxon>
        <taxon>Pseudomonadati</taxon>
        <taxon>Pseudomonadota</taxon>
        <taxon>Gammaproteobacteria</taxon>
        <taxon>Vibrionales</taxon>
        <taxon>Vibrionaceae</taxon>
        <taxon>Vibrio</taxon>
    </lineage>
</organism>
<gene>
    <name evidence="1" type="primary">glmU</name>
    <name type="ordered locus">VC0395_A2530</name>
    <name type="ordered locus">VC395_0193</name>
</gene>
<name>GLMU_VIBC3</name>
<sequence>MKFSTVILAAGKGTRMHSNMPKVLHTLAGKPMVKHVIDTCNNLGAQNIHLVYGHGGDQMQQALVNESVNWVLQAQQLGTGHAVDQASPHFQDDEKILVLYGDVPLISEDTIESLLEAQPTDGIALLTVVLEDPTGYGRIVRKRGPVVAIVEQKDASEEQKLIKEVNTGVLVATGRDLKRWLAGLNNNNAQGEYYLTDVIAAAHDEGRAVEAVHPSHSIEVEGVNDRIQLARLERAFQARQAKKLLEQGVMLRDPARFDLRGTLQCGSDVEIDVNVIIEGNVSIGNNVVIGAGSILKDCEIDDNTVIRPYSVIEGATVGENCTVGPFTRLRPGAELRDDAHVGNFVEMKNARLGEGSKANHLTYLGDAEIGKGVNVGAGVITCNYDGANKHKTVIGDDVFVGSDCQLVAPVTIGNGATIGAGTTLTKNVAEGELVITRAPERKIAGWQRPAKKK</sequence>
<keyword id="KW-0012">Acyltransferase</keyword>
<keyword id="KW-0133">Cell shape</keyword>
<keyword id="KW-0961">Cell wall biogenesis/degradation</keyword>
<keyword id="KW-0963">Cytoplasm</keyword>
<keyword id="KW-0460">Magnesium</keyword>
<keyword id="KW-0479">Metal-binding</keyword>
<keyword id="KW-0511">Multifunctional enzyme</keyword>
<keyword id="KW-0548">Nucleotidyltransferase</keyword>
<keyword id="KW-0573">Peptidoglycan synthesis</keyword>
<keyword id="KW-0677">Repeat</keyword>
<keyword id="KW-0808">Transferase</keyword>
<evidence type="ECO:0000255" key="1">
    <source>
        <dbReference type="HAMAP-Rule" id="MF_01631"/>
    </source>
</evidence>
<feature type="chain" id="PRO_1000073650" description="Bifunctional protein GlmU">
    <location>
        <begin position="1"/>
        <end position="453"/>
    </location>
</feature>
<feature type="region of interest" description="Pyrophosphorylase" evidence="1">
    <location>
        <begin position="1"/>
        <end position="226"/>
    </location>
</feature>
<feature type="region of interest" description="Linker" evidence="1">
    <location>
        <begin position="227"/>
        <end position="247"/>
    </location>
</feature>
<feature type="region of interest" description="N-acetyltransferase" evidence="1">
    <location>
        <begin position="248"/>
        <end position="453"/>
    </location>
</feature>
<feature type="active site" description="Proton acceptor" evidence="1">
    <location>
        <position position="360"/>
    </location>
</feature>
<feature type="binding site" evidence="1">
    <location>
        <begin position="8"/>
        <end position="11"/>
    </location>
    <ligand>
        <name>UDP-N-acetyl-alpha-D-glucosamine</name>
        <dbReference type="ChEBI" id="CHEBI:57705"/>
    </ligand>
</feature>
<feature type="binding site" evidence="1">
    <location>
        <position position="22"/>
    </location>
    <ligand>
        <name>UDP-N-acetyl-alpha-D-glucosamine</name>
        <dbReference type="ChEBI" id="CHEBI:57705"/>
    </ligand>
</feature>
<feature type="binding site" evidence="1">
    <location>
        <position position="73"/>
    </location>
    <ligand>
        <name>UDP-N-acetyl-alpha-D-glucosamine</name>
        <dbReference type="ChEBI" id="CHEBI:57705"/>
    </ligand>
</feature>
<feature type="binding site" evidence="1">
    <location>
        <begin position="78"/>
        <end position="79"/>
    </location>
    <ligand>
        <name>UDP-N-acetyl-alpha-D-glucosamine</name>
        <dbReference type="ChEBI" id="CHEBI:57705"/>
    </ligand>
</feature>
<feature type="binding site" evidence="1">
    <location>
        <begin position="100"/>
        <end position="102"/>
    </location>
    <ligand>
        <name>UDP-N-acetyl-alpha-D-glucosamine</name>
        <dbReference type="ChEBI" id="CHEBI:57705"/>
    </ligand>
</feature>
<feature type="binding site" evidence="1">
    <location>
        <position position="102"/>
    </location>
    <ligand>
        <name>Mg(2+)</name>
        <dbReference type="ChEBI" id="CHEBI:18420"/>
    </ligand>
</feature>
<feature type="binding site" evidence="1">
    <location>
        <position position="137"/>
    </location>
    <ligand>
        <name>UDP-N-acetyl-alpha-D-glucosamine</name>
        <dbReference type="ChEBI" id="CHEBI:57705"/>
    </ligand>
</feature>
<feature type="binding site" evidence="1">
    <location>
        <position position="151"/>
    </location>
    <ligand>
        <name>UDP-N-acetyl-alpha-D-glucosamine</name>
        <dbReference type="ChEBI" id="CHEBI:57705"/>
    </ligand>
</feature>
<feature type="binding site" evidence="1">
    <location>
        <position position="166"/>
    </location>
    <ligand>
        <name>UDP-N-acetyl-alpha-D-glucosamine</name>
        <dbReference type="ChEBI" id="CHEBI:57705"/>
    </ligand>
</feature>
<feature type="binding site" evidence="1">
    <location>
        <position position="224"/>
    </location>
    <ligand>
        <name>Mg(2+)</name>
        <dbReference type="ChEBI" id="CHEBI:18420"/>
    </ligand>
</feature>
<feature type="binding site" evidence="1">
    <location>
        <position position="224"/>
    </location>
    <ligand>
        <name>UDP-N-acetyl-alpha-D-glucosamine</name>
        <dbReference type="ChEBI" id="CHEBI:57705"/>
    </ligand>
</feature>
<feature type="binding site" evidence="1">
    <location>
        <position position="330"/>
    </location>
    <ligand>
        <name>UDP-N-acetyl-alpha-D-glucosamine</name>
        <dbReference type="ChEBI" id="CHEBI:57705"/>
    </ligand>
</feature>
<feature type="binding site" evidence="1">
    <location>
        <position position="348"/>
    </location>
    <ligand>
        <name>UDP-N-acetyl-alpha-D-glucosamine</name>
        <dbReference type="ChEBI" id="CHEBI:57705"/>
    </ligand>
</feature>
<feature type="binding site" evidence="1">
    <location>
        <position position="363"/>
    </location>
    <ligand>
        <name>UDP-N-acetyl-alpha-D-glucosamine</name>
        <dbReference type="ChEBI" id="CHEBI:57705"/>
    </ligand>
</feature>
<feature type="binding site" evidence="1">
    <location>
        <position position="374"/>
    </location>
    <ligand>
        <name>UDP-N-acetyl-alpha-D-glucosamine</name>
        <dbReference type="ChEBI" id="CHEBI:57705"/>
    </ligand>
</feature>
<feature type="binding site" evidence="1">
    <location>
        <position position="377"/>
    </location>
    <ligand>
        <name>acetyl-CoA</name>
        <dbReference type="ChEBI" id="CHEBI:57288"/>
    </ligand>
</feature>
<feature type="binding site" evidence="1">
    <location>
        <begin position="383"/>
        <end position="384"/>
    </location>
    <ligand>
        <name>acetyl-CoA</name>
        <dbReference type="ChEBI" id="CHEBI:57288"/>
    </ligand>
</feature>
<feature type="binding site" evidence="1">
    <location>
        <position position="402"/>
    </location>
    <ligand>
        <name>acetyl-CoA</name>
        <dbReference type="ChEBI" id="CHEBI:57288"/>
    </ligand>
</feature>
<feature type="binding site" evidence="1">
    <location>
        <position position="420"/>
    </location>
    <ligand>
        <name>acetyl-CoA</name>
        <dbReference type="ChEBI" id="CHEBI:57288"/>
    </ligand>
</feature>
<feature type="binding site" evidence="1">
    <location>
        <position position="437"/>
    </location>
    <ligand>
        <name>acetyl-CoA</name>
        <dbReference type="ChEBI" id="CHEBI:57288"/>
    </ligand>
</feature>
<proteinExistence type="inferred from homology"/>
<accession>A5F461</accession>
<accession>C3M341</accession>
<comment type="function">
    <text evidence="1">Catalyzes the last two sequential reactions in the de novo biosynthetic pathway for UDP-N-acetylglucosamine (UDP-GlcNAc). The C-terminal domain catalyzes the transfer of acetyl group from acetyl coenzyme A to glucosamine-1-phosphate (GlcN-1-P) to produce N-acetylglucosamine-1-phosphate (GlcNAc-1-P), which is converted into UDP-GlcNAc by the transfer of uridine 5-monophosphate (from uridine 5-triphosphate), a reaction catalyzed by the N-terminal domain.</text>
</comment>
<comment type="catalytic activity">
    <reaction evidence="1">
        <text>alpha-D-glucosamine 1-phosphate + acetyl-CoA = N-acetyl-alpha-D-glucosamine 1-phosphate + CoA + H(+)</text>
        <dbReference type="Rhea" id="RHEA:13725"/>
        <dbReference type="ChEBI" id="CHEBI:15378"/>
        <dbReference type="ChEBI" id="CHEBI:57287"/>
        <dbReference type="ChEBI" id="CHEBI:57288"/>
        <dbReference type="ChEBI" id="CHEBI:57776"/>
        <dbReference type="ChEBI" id="CHEBI:58516"/>
        <dbReference type="EC" id="2.3.1.157"/>
    </reaction>
</comment>
<comment type="catalytic activity">
    <reaction evidence="1">
        <text>N-acetyl-alpha-D-glucosamine 1-phosphate + UTP + H(+) = UDP-N-acetyl-alpha-D-glucosamine + diphosphate</text>
        <dbReference type="Rhea" id="RHEA:13509"/>
        <dbReference type="ChEBI" id="CHEBI:15378"/>
        <dbReference type="ChEBI" id="CHEBI:33019"/>
        <dbReference type="ChEBI" id="CHEBI:46398"/>
        <dbReference type="ChEBI" id="CHEBI:57705"/>
        <dbReference type="ChEBI" id="CHEBI:57776"/>
        <dbReference type="EC" id="2.7.7.23"/>
    </reaction>
</comment>
<comment type="cofactor">
    <cofactor evidence="1">
        <name>Mg(2+)</name>
        <dbReference type="ChEBI" id="CHEBI:18420"/>
    </cofactor>
    <text evidence="1">Binds 1 Mg(2+) ion per subunit.</text>
</comment>
<comment type="pathway">
    <text evidence="1">Nucleotide-sugar biosynthesis; UDP-N-acetyl-alpha-D-glucosamine biosynthesis; N-acetyl-alpha-D-glucosamine 1-phosphate from alpha-D-glucosamine 6-phosphate (route II): step 2/2.</text>
</comment>
<comment type="pathway">
    <text evidence="1">Nucleotide-sugar biosynthesis; UDP-N-acetyl-alpha-D-glucosamine biosynthesis; UDP-N-acetyl-alpha-D-glucosamine from N-acetyl-alpha-D-glucosamine 1-phosphate: step 1/1.</text>
</comment>
<comment type="pathway">
    <text evidence="1">Bacterial outer membrane biogenesis; LPS lipid A biosynthesis.</text>
</comment>
<comment type="subunit">
    <text evidence="1">Homotrimer.</text>
</comment>
<comment type="subcellular location">
    <subcellularLocation>
        <location evidence="1">Cytoplasm</location>
    </subcellularLocation>
</comment>
<comment type="similarity">
    <text evidence="1">In the N-terminal section; belongs to the N-acetylglucosamine-1-phosphate uridyltransferase family.</text>
</comment>
<comment type="similarity">
    <text evidence="1">In the C-terminal section; belongs to the transferase hexapeptide repeat family.</text>
</comment>
<protein>
    <recommendedName>
        <fullName evidence="1">Bifunctional protein GlmU</fullName>
    </recommendedName>
    <domain>
        <recommendedName>
            <fullName evidence="1">UDP-N-acetylglucosamine pyrophosphorylase</fullName>
            <ecNumber evidence="1">2.7.7.23</ecNumber>
        </recommendedName>
        <alternativeName>
            <fullName evidence="1">N-acetylglucosamine-1-phosphate uridyltransferase</fullName>
        </alternativeName>
    </domain>
    <domain>
        <recommendedName>
            <fullName evidence="1">Glucosamine-1-phosphate N-acetyltransferase</fullName>
            <ecNumber evidence="1">2.3.1.157</ecNumber>
        </recommendedName>
    </domain>
</protein>